<name>TRI44_BOVIN</name>
<protein>
    <recommendedName>
        <fullName>Tripartite motif-containing protein 44</fullName>
    </recommendedName>
</protein>
<sequence length="338" mass="37512">MASGGGAAFEELPHDGTCDECEPDEAPGAEEVCRECGFCYCRHHAEAHGQKFPRHHLAEYVHCAAQAWTPGARGDGAGEEAVEAPVENEKALENEAGEGIESEEDSEPEEESETEEESEDESEEDSEEEMEDEQESEAEEDNQEEGESEAEGETEAESEFDPEIEMEAERVAKRKCPDHGLDLSTYCQEDKQLICVLCPVIGAHHGHHLSTLDEAFEELRSKDSGGLKAAMIELVERLKFKSSDPKVTRDQMKMFIQQEFKKVQKVIADEEQKALHLVDIQEAMATAHVTEILADIQSHMDRLMTQMAQAKEQLDTSNESAEPKAEGDEEEPGGTDED</sequence>
<gene>
    <name type="primary">TRIM44</name>
</gene>
<evidence type="ECO:0000250" key="1">
    <source>
        <dbReference type="UniProtKB" id="Q96DX7"/>
    </source>
</evidence>
<evidence type="ECO:0000255" key="2"/>
<evidence type="ECO:0000255" key="3">
    <source>
        <dbReference type="PROSITE-ProRule" id="PRU00024"/>
    </source>
</evidence>
<evidence type="ECO:0000256" key="4">
    <source>
        <dbReference type="SAM" id="MobiDB-lite"/>
    </source>
</evidence>
<keyword id="KW-0175">Coiled coil</keyword>
<keyword id="KW-0479">Metal-binding</keyword>
<keyword id="KW-1185">Reference proteome</keyword>
<keyword id="KW-0862">Zinc</keyword>
<keyword id="KW-0863">Zinc-finger</keyword>
<proteinExistence type="evidence at transcript level"/>
<organism>
    <name type="scientific">Bos taurus</name>
    <name type="common">Bovine</name>
    <dbReference type="NCBI Taxonomy" id="9913"/>
    <lineage>
        <taxon>Eukaryota</taxon>
        <taxon>Metazoa</taxon>
        <taxon>Chordata</taxon>
        <taxon>Craniata</taxon>
        <taxon>Vertebrata</taxon>
        <taxon>Euteleostomi</taxon>
        <taxon>Mammalia</taxon>
        <taxon>Eutheria</taxon>
        <taxon>Laurasiatheria</taxon>
        <taxon>Artiodactyla</taxon>
        <taxon>Ruminantia</taxon>
        <taxon>Pecora</taxon>
        <taxon>Bovidae</taxon>
        <taxon>Bovinae</taxon>
        <taxon>Bos</taxon>
    </lineage>
</organism>
<comment type="function">
    <text evidence="1">May play a role in the process of differentiation and maturation of neuronal cells (By similarity). May regulate the activity of TRIM17 (By similarity). Is a negative regulator of PAX6 expression (By similarity).</text>
</comment>
<comment type="subunit">
    <text evidence="1">Interacts (via coiled coil) with TRIM17 (via coiled coil).</text>
</comment>
<feature type="chain" id="PRO_0000324097" description="Tripartite motif-containing protein 44">
    <location>
        <begin position="1"/>
        <end position="338"/>
    </location>
</feature>
<feature type="zinc finger region" description="B box-type" evidence="3">
    <location>
        <begin position="171"/>
        <end position="212"/>
    </location>
</feature>
<feature type="region of interest" description="Disordered" evidence="4">
    <location>
        <begin position="1"/>
        <end position="25"/>
    </location>
</feature>
<feature type="region of interest" description="Disordered" evidence="4">
    <location>
        <begin position="72"/>
        <end position="162"/>
    </location>
</feature>
<feature type="region of interest" description="Disordered" evidence="4">
    <location>
        <begin position="307"/>
        <end position="338"/>
    </location>
</feature>
<feature type="coiled-coil region" evidence="2">
    <location>
        <begin position="109"/>
        <end position="153"/>
    </location>
</feature>
<feature type="coiled-coil region" evidence="2">
    <location>
        <begin position="257"/>
        <end position="322"/>
    </location>
</feature>
<feature type="compositionally biased region" description="Acidic residues" evidence="4">
    <location>
        <begin position="95"/>
        <end position="162"/>
    </location>
</feature>
<feature type="compositionally biased region" description="Acidic residues" evidence="4">
    <location>
        <begin position="327"/>
        <end position="338"/>
    </location>
</feature>
<feature type="binding site" evidence="3">
    <location>
        <position position="176"/>
    </location>
    <ligand>
        <name>Zn(2+)</name>
        <dbReference type="ChEBI" id="CHEBI:29105"/>
    </ligand>
</feature>
<feature type="binding site" evidence="3">
    <location>
        <position position="179"/>
    </location>
    <ligand>
        <name>Zn(2+)</name>
        <dbReference type="ChEBI" id="CHEBI:29105"/>
    </ligand>
</feature>
<feature type="binding site" evidence="3">
    <location>
        <position position="198"/>
    </location>
    <ligand>
        <name>Zn(2+)</name>
        <dbReference type="ChEBI" id="CHEBI:29105"/>
    </ligand>
</feature>
<feature type="binding site" evidence="3">
    <location>
        <position position="204"/>
    </location>
    <ligand>
        <name>Zn(2+)</name>
        <dbReference type="ChEBI" id="CHEBI:29105"/>
    </ligand>
</feature>
<reference key="1">
    <citation type="submission" date="2007-07" db="EMBL/GenBank/DDBJ databases">
        <authorList>
            <consortium name="NIH - Mammalian Gene Collection (MGC) project"/>
        </authorList>
    </citation>
    <scope>NUCLEOTIDE SEQUENCE [LARGE SCALE MRNA]</scope>
    <source>
        <strain>Hereford</strain>
        <tissue>Fetal brain</tissue>
    </source>
</reference>
<dbReference type="EMBL" id="BC150032">
    <property type="protein sequence ID" value="AAI50033.1"/>
    <property type="molecule type" value="mRNA"/>
</dbReference>
<dbReference type="RefSeq" id="NP_001098484.1">
    <property type="nucleotide sequence ID" value="NM_001105014.2"/>
</dbReference>
<dbReference type="SMR" id="A6QQX5"/>
<dbReference type="FunCoup" id="A6QQX5">
    <property type="interactions" value="1592"/>
</dbReference>
<dbReference type="STRING" id="9913.ENSBTAP00000051946"/>
<dbReference type="PaxDb" id="9913-ENSBTAP00000051946"/>
<dbReference type="Ensembl" id="ENSBTAT00000052439.4">
    <property type="protein sequence ID" value="ENSBTAP00000051946.2"/>
    <property type="gene ID" value="ENSBTAG00000037389.4"/>
</dbReference>
<dbReference type="GeneID" id="782816"/>
<dbReference type="KEGG" id="bta:782816"/>
<dbReference type="CTD" id="54765"/>
<dbReference type="VEuPathDB" id="HostDB:ENSBTAG00000037389"/>
<dbReference type="VGNC" id="VGNC:36336">
    <property type="gene designation" value="TRIM44"/>
</dbReference>
<dbReference type="eggNOG" id="ENOG502RHR7">
    <property type="taxonomic scope" value="Eukaryota"/>
</dbReference>
<dbReference type="GeneTree" id="ENSGT00440000034605"/>
<dbReference type="HOGENOM" id="CLU_070347_0_0_1"/>
<dbReference type="InParanoid" id="A6QQX5"/>
<dbReference type="OMA" id="LREAYMW"/>
<dbReference type="OrthoDB" id="9049620at2759"/>
<dbReference type="TreeFam" id="TF333911"/>
<dbReference type="Proteomes" id="UP000009136">
    <property type="component" value="Chromosome 15"/>
</dbReference>
<dbReference type="Bgee" id="ENSBTAG00000037389">
    <property type="expression patterns" value="Expressed in choroid plexus and 107 other cell types or tissues"/>
</dbReference>
<dbReference type="GO" id="GO:0005737">
    <property type="term" value="C:cytoplasm"/>
    <property type="evidence" value="ECO:0000318"/>
    <property type="project" value="GO_Central"/>
</dbReference>
<dbReference type="GO" id="GO:0061630">
    <property type="term" value="F:ubiquitin protein ligase activity"/>
    <property type="evidence" value="ECO:0000318"/>
    <property type="project" value="GO_Central"/>
</dbReference>
<dbReference type="GO" id="GO:0008270">
    <property type="term" value="F:zinc ion binding"/>
    <property type="evidence" value="ECO:0007669"/>
    <property type="project" value="UniProtKB-KW"/>
</dbReference>
<dbReference type="GO" id="GO:0045087">
    <property type="term" value="P:innate immune response"/>
    <property type="evidence" value="ECO:0000318"/>
    <property type="project" value="GO_Central"/>
</dbReference>
<dbReference type="GO" id="GO:0050821">
    <property type="term" value="P:protein stabilization"/>
    <property type="evidence" value="ECO:0000318"/>
    <property type="project" value="GO_Central"/>
</dbReference>
<dbReference type="GO" id="GO:0010468">
    <property type="term" value="P:regulation of gene expression"/>
    <property type="evidence" value="ECO:0000318"/>
    <property type="project" value="GO_Central"/>
</dbReference>
<dbReference type="CDD" id="cd19841">
    <property type="entry name" value="Bbox1_TRIM44"/>
    <property type="match status" value="1"/>
</dbReference>
<dbReference type="Gene3D" id="3.30.160.60">
    <property type="entry name" value="Classic Zinc Finger"/>
    <property type="match status" value="1"/>
</dbReference>
<dbReference type="InterPro" id="IPR050143">
    <property type="entry name" value="TRIM/RBCC"/>
</dbReference>
<dbReference type="InterPro" id="IPR000315">
    <property type="entry name" value="Znf_B-box"/>
</dbReference>
<dbReference type="PANTHER" id="PTHR24103">
    <property type="entry name" value="E3 UBIQUITIN-PROTEIN LIGASE TRIM"/>
    <property type="match status" value="1"/>
</dbReference>
<dbReference type="Pfam" id="PF00643">
    <property type="entry name" value="zf-B_box"/>
    <property type="match status" value="1"/>
</dbReference>
<dbReference type="SMART" id="SM00336">
    <property type="entry name" value="BBOX"/>
    <property type="match status" value="1"/>
</dbReference>
<dbReference type="SUPFAM" id="SSF57845">
    <property type="entry name" value="B-box zinc-binding domain"/>
    <property type="match status" value="1"/>
</dbReference>
<dbReference type="PROSITE" id="PS50119">
    <property type="entry name" value="ZF_BBOX"/>
    <property type="match status" value="1"/>
</dbReference>
<accession>A6QQX5</accession>